<proteinExistence type="inferred from homology"/>
<name>PEPE_SALAR</name>
<sequence>MELLLLSNSTLPGKAWLEHALPLMANQLNGRRSAVFIPFAGVTQTWDEYTDKTAEVLTPLGINVTGIHRIAAPLEAIEKSEIIIVGGGNTFQLLKESRERGLLAPIADRVKRGALYIGWSAGANLACPTIRTTNDMPIVDPNGFDALGLFPLQINPHFTNALPEGHKGETREQRIRELLVVAPELTVIGLPEGNWIQVSNGQAVLGGPNTTWVFKAGEEAVALEAGHRF</sequence>
<dbReference type="EC" id="3.4.13.21" evidence="1"/>
<dbReference type="EMBL" id="CP000880">
    <property type="protein sequence ID" value="ABX23295.1"/>
    <property type="molecule type" value="Genomic_DNA"/>
</dbReference>
<dbReference type="SMR" id="A9MHB2"/>
<dbReference type="STRING" id="41514.SARI_03466"/>
<dbReference type="MEROPS" id="S51.001"/>
<dbReference type="KEGG" id="ses:SARI_03466"/>
<dbReference type="HOGENOM" id="CLU_071689_0_0_6"/>
<dbReference type="Proteomes" id="UP000002084">
    <property type="component" value="Chromosome"/>
</dbReference>
<dbReference type="GO" id="GO:0005737">
    <property type="term" value="C:cytoplasm"/>
    <property type="evidence" value="ECO:0007669"/>
    <property type="project" value="UniProtKB-SubCell"/>
</dbReference>
<dbReference type="GO" id="GO:0016805">
    <property type="term" value="F:dipeptidase activity"/>
    <property type="evidence" value="ECO:0007669"/>
    <property type="project" value="UniProtKB-UniRule"/>
</dbReference>
<dbReference type="GO" id="GO:0008236">
    <property type="term" value="F:serine-type peptidase activity"/>
    <property type="evidence" value="ECO:0007669"/>
    <property type="project" value="UniProtKB-KW"/>
</dbReference>
<dbReference type="GO" id="GO:0006508">
    <property type="term" value="P:proteolysis"/>
    <property type="evidence" value="ECO:0007669"/>
    <property type="project" value="UniProtKB-UniRule"/>
</dbReference>
<dbReference type="CDD" id="cd03146">
    <property type="entry name" value="GAT1_Peptidase_E"/>
    <property type="match status" value="1"/>
</dbReference>
<dbReference type="FunFam" id="3.40.50.880:FF:000007">
    <property type="entry name" value="Peptidase E"/>
    <property type="match status" value="1"/>
</dbReference>
<dbReference type="Gene3D" id="3.40.50.880">
    <property type="match status" value="1"/>
</dbReference>
<dbReference type="HAMAP" id="MF_00510">
    <property type="entry name" value="Peptidase_E"/>
    <property type="match status" value="1"/>
</dbReference>
<dbReference type="InterPro" id="IPR029062">
    <property type="entry name" value="Class_I_gatase-like"/>
</dbReference>
<dbReference type="InterPro" id="IPR005320">
    <property type="entry name" value="Peptidase_S51"/>
</dbReference>
<dbReference type="InterPro" id="IPR023172">
    <property type="entry name" value="Peptidase_S51_dipeptidase-E"/>
</dbReference>
<dbReference type="NCBIfam" id="NF003642">
    <property type="entry name" value="PRK05282.1"/>
    <property type="match status" value="1"/>
</dbReference>
<dbReference type="PANTHER" id="PTHR20842:SF0">
    <property type="entry name" value="ALPHA-ASPARTYL DIPEPTIDASE"/>
    <property type="match status" value="1"/>
</dbReference>
<dbReference type="PANTHER" id="PTHR20842">
    <property type="entry name" value="PROTEASE S51 ALPHA-ASPARTYL DIPEPTIDASE"/>
    <property type="match status" value="1"/>
</dbReference>
<dbReference type="Pfam" id="PF03575">
    <property type="entry name" value="Peptidase_S51"/>
    <property type="match status" value="1"/>
</dbReference>
<dbReference type="SUPFAM" id="SSF52317">
    <property type="entry name" value="Class I glutamine amidotransferase-like"/>
    <property type="match status" value="1"/>
</dbReference>
<comment type="function">
    <text evidence="1">Hydrolyzes dipeptides containing N-terminal aspartate residues. May play a role in allowing the cell to use peptide aspartate to spare carbon otherwise required for the synthesis of the aspartate family of amino acids.</text>
</comment>
<comment type="catalytic activity">
    <reaction evidence="1">
        <text>Dipeptidase E catalyzes the hydrolysis of dipeptides Asp-|-Xaa. It does not act on peptides with N-terminal Glu, Asn or Gln, nor does it cleave isoaspartyl peptides.</text>
        <dbReference type="EC" id="3.4.13.21"/>
    </reaction>
</comment>
<comment type="subcellular location">
    <subcellularLocation>
        <location evidence="1">Cytoplasm</location>
    </subcellularLocation>
</comment>
<comment type="similarity">
    <text evidence="1">Belongs to the peptidase S51 family.</text>
</comment>
<protein>
    <recommendedName>
        <fullName evidence="1">Peptidase E</fullName>
        <ecNumber evidence="1">3.4.13.21</ecNumber>
    </recommendedName>
    <alternativeName>
        <fullName evidence="1">Alpha-aspartyl dipeptidase</fullName>
    </alternativeName>
    <alternativeName>
        <fullName evidence="1">Asp-specific dipeptidase</fullName>
    </alternativeName>
    <alternativeName>
        <fullName evidence="1">Dipeptidase E</fullName>
    </alternativeName>
</protein>
<evidence type="ECO:0000255" key="1">
    <source>
        <dbReference type="HAMAP-Rule" id="MF_00510"/>
    </source>
</evidence>
<gene>
    <name evidence="1" type="primary">pepE</name>
    <name type="ordered locus">SARI_03466</name>
</gene>
<keyword id="KW-0963">Cytoplasm</keyword>
<keyword id="KW-0224">Dipeptidase</keyword>
<keyword id="KW-0378">Hydrolase</keyword>
<keyword id="KW-0645">Protease</keyword>
<keyword id="KW-1185">Reference proteome</keyword>
<keyword id="KW-0720">Serine protease</keyword>
<accession>A9MHB2</accession>
<organism>
    <name type="scientific">Salmonella arizonae (strain ATCC BAA-731 / CDC346-86 / RSK2980)</name>
    <dbReference type="NCBI Taxonomy" id="41514"/>
    <lineage>
        <taxon>Bacteria</taxon>
        <taxon>Pseudomonadati</taxon>
        <taxon>Pseudomonadota</taxon>
        <taxon>Gammaproteobacteria</taxon>
        <taxon>Enterobacterales</taxon>
        <taxon>Enterobacteriaceae</taxon>
        <taxon>Salmonella</taxon>
    </lineage>
</organism>
<reference key="1">
    <citation type="submission" date="2007-11" db="EMBL/GenBank/DDBJ databases">
        <authorList>
            <consortium name="The Salmonella enterica serovar Arizonae Genome Sequencing Project"/>
            <person name="McClelland M."/>
            <person name="Sanderson E.K."/>
            <person name="Porwollik S."/>
            <person name="Spieth J."/>
            <person name="Clifton W.S."/>
            <person name="Fulton R."/>
            <person name="Chunyan W."/>
            <person name="Wollam A."/>
            <person name="Shah N."/>
            <person name="Pepin K."/>
            <person name="Bhonagiri V."/>
            <person name="Nash W."/>
            <person name="Johnson M."/>
            <person name="Thiruvilangam P."/>
            <person name="Wilson R."/>
        </authorList>
    </citation>
    <scope>NUCLEOTIDE SEQUENCE [LARGE SCALE GENOMIC DNA]</scope>
    <source>
        <strain>ATCC BAA-731 / CDC346-86 / RSK2980</strain>
    </source>
</reference>
<feature type="chain" id="PRO_1000081586" description="Peptidase E">
    <location>
        <begin position="1"/>
        <end position="229"/>
    </location>
</feature>
<feature type="active site" description="Charge relay system" evidence="1">
    <location>
        <position position="120"/>
    </location>
</feature>
<feature type="active site" description="Charge relay system" evidence="1">
    <location>
        <position position="135"/>
    </location>
</feature>
<feature type="active site" description="Charge relay system" evidence="1">
    <location>
        <position position="157"/>
    </location>
</feature>